<proteinExistence type="inferred from homology"/>
<name>PANC_SACEN</name>
<evidence type="ECO:0000255" key="1">
    <source>
        <dbReference type="HAMAP-Rule" id="MF_00158"/>
    </source>
</evidence>
<gene>
    <name evidence="1" type="primary">panC</name>
    <name type="ordered locus">SACE_0406</name>
</gene>
<keyword id="KW-0067">ATP-binding</keyword>
<keyword id="KW-0963">Cytoplasm</keyword>
<keyword id="KW-0436">Ligase</keyword>
<keyword id="KW-0547">Nucleotide-binding</keyword>
<keyword id="KW-0566">Pantothenate biosynthesis</keyword>
<keyword id="KW-1185">Reference proteome</keyword>
<organism>
    <name type="scientific">Saccharopolyspora erythraea (strain ATCC 11635 / DSM 40517 / JCM 4748 / NBRC 13426 / NCIMB 8594 / NRRL 2338)</name>
    <dbReference type="NCBI Taxonomy" id="405948"/>
    <lineage>
        <taxon>Bacteria</taxon>
        <taxon>Bacillati</taxon>
        <taxon>Actinomycetota</taxon>
        <taxon>Actinomycetes</taxon>
        <taxon>Pseudonocardiales</taxon>
        <taxon>Pseudonocardiaceae</taxon>
        <taxon>Saccharopolyspora</taxon>
    </lineage>
</organism>
<sequence>MTAPERVGAGPGFAPGALTVHHHPDELAKVTRALRATGRRITLVPTMGALHEGHLELIRRARRDSNSVVVVSIFVNPLQFGPGEDFTSYPRTFETDVEACRAEGVELVFAPDRDDVYGPDPQITVHPGPLGDELEGASRPGHFAGVLTIVAKLLGIVRPDLALFGEKDYQQLVLIRRMARELNIDTAIQGIPIVRAPDGLALSSRNVYLSEEERGAALALSAALAAGAHAGREGAEAVLRAAREVLATEPLVRLDYLELRDTELGAAPAEGEARLLVAAKVGETRLIDNALVLLGDQGDSRP</sequence>
<accession>A4F6T0</accession>
<comment type="function">
    <text evidence="1">Catalyzes the condensation of pantoate with beta-alanine in an ATP-dependent reaction via a pantoyl-adenylate intermediate.</text>
</comment>
<comment type="catalytic activity">
    <reaction evidence="1">
        <text>(R)-pantoate + beta-alanine + ATP = (R)-pantothenate + AMP + diphosphate + H(+)</text>
        <dbReference type="Rhea" id="RHEA:10912"/>
        <dbReference type="ChEBI" id="CHEBI:15378"/>
        <dbReference type="ChEBI" id="CHEBI:15980"/>
        <dbReference type="ChEBI" id="CHEBI:29032"/>
        <dbReference type="ChEBI" id="CHEBI:30616"/>
        <dbReference type="ChEBI" id="CHEBI:33019"/>
        <dbReference type="ChEBI" id="CHEBI:57966"/>
        <dbReference type="ChEBI" id="CHEBI:456215"/>
        <dbReference type="EC" id="6.3.2.1"/>
    </reaction>
</comment>
<comment type="pathway">
    <text evidence="1">Cofactor biosynthesis; (R)-pantothenate biosynthesis; (R)-pantothenate from (R)-pantoate and beta-alanine: step 1/1.</text>
</comment>
<comment type="subunit">
    <text evidence="1">Homodimer.</text>
</comment>
<comment type="subcellular location">
    <subcellularLocation>
        <location evidence="1">Cytoplasm</location>
    </subcellularLocation>
</comment>
<comment type="miscellaneous">
    <text evidence="1">The reaction proceeds by a bi uni uni bi ping pong mechanism.</text>
</comment>
<comment type="similarity">
    <text evidence="1">Belongs to the pantothenate synthetase family.</text>
</comment>
<feature type="chain" id="PRO_0000305542" description="Pantothenate synthetase">
    <location>
        <begin position="1"/>
        <end position="302"/>
    </location>
</feature>
<feature type="active site" description="Proton donor" evidence="1">
    <location>
        <position position="54"/>
    </location>
</feature>
<feature type="binding site" evidence="1">
    <location>
        <begin position="47"/>
        <end position="54"/>
    </location>
    <ligand>
        <name>ATP</name>
        <dbReference type="ChEBI" id="CHEBI:30616"/>
    </ligand>
</feature>
<feature type="binding site" evidence="1">
    <location>
        <position position="79"/>
    </location>
    <ligand>
        <name>(R)-pantoate</name>
        <dbReference type="ChEBI" id="CHEBI:15980"/>
    </ligand>
</feature>
<feature type="binding site" evidence="1">
    <location>
        <position position="79"/>
    </location>
    <ligand>
        <name>beta-alanine</name>
        <dbReference type="ChEBI" id="CHEBI:57966"/>
    </ligand>
</feature>
<feature type="binding site" evidence="1">
    <location>
        <begin position="165"/>
        <end position="168"/>
    </location>
    <ligand>
        <name>ATP</name>
        <dbReference type="ChEBI" id="CHEBI:30616"/>
    </ligand>
</feature>
<feature type="binding site" evidence="1">
    <location>
        <position position="171"/>
    </location>
    <ligand>
        <name>(R)-pantoate</name>
        <dbReference type="ChEBI" id="CHEBI:15980"/>
    </ligand>
</feature>
<feature type="binding site" evidence="1">
    <location>
        <position position="194"/>
    </location>
    <ligand>
        <name>ATP</name>
        <dbReference type="ChEBI" id="CHEBI:30616"/>
    </ligand>
</feature>
<feature type="binding site" evidence="1">
    <location>
        <begin position="202"/>
        <end position="205"/>
    </location>
    <ligand>
        <name>ATP</name>
        <dbReference type="ChEBI" id="CHEBI:30616"/>
    </ligand>
</feature>
<reference key="1">
    <citation type="journal article" date="2007" name="Nat. Biotechnol.">
        <title>Complete genome sequence of the erythromycin-producing bacterium Saccharopolyspora erythraea NRRL23338.</title>
        <authorList>
            <person name="Oliynyk M."/>
            <person name="Samborskyy M."/>
            <person name="Lester J.B."/>
            <person name="Mironenko T."/>
            <person name="Scott N."/>
            <person name="Dickens S."/>
            <person name="Haydock S.F."/>
            <person name="Leadlay P.F."/>
        </authorList>
    </citation>
    <scope>NUCLEOTIDE SEQUENCE [LARGE SCALE GENOMIC DNA]</scope>
    <source>
        <strain>ATCC 11635 / DSM 40517 / JCM 4748 / NBRC 13426 / NCIMB 8594 / NRRL 2338</strain>
    </source>
</reference>
<protein>
    <recommendedName>
        <fullName evidence="1">Pantothenate synthetase</fullName>
        <shortName evidence="1">PS</shortName>
        <ecNumber evidence="1">6.3.2.1</ecNumber>
    </recommendedName>
    <alternativeName>
        <fullName evidence="1">Pantoate--beta-alanine ligase</fullName>
    </alternativeName>
    <alternativeName>
        <fullName evidence="1">Pantoate-activating enzyme</fullName>
    </alternativeName>
</protein>
<dbReference type="EC" id="6.3.2.1" evidence="1"/>
<dbReference type="EMBL" id="AM420293">
    <property type="protein sequence ID" value="CAL99754.1"/>
    <property type="molecule type" value="Genomic_DNA"/>
</dbReference>
<dbReference type="RefSeq" id="WP_009946424.1">
    <property type="nucleotide sequence ID" value="NC_009142.1"/>
</dbReference>
<dbReference type="SMR" id="A4F6T0"/>
<dbReference type="STRING" id="405948.SACE_0406"/>
<dbReference type="KEGG" id="sen:SACE_0406"/>
<dbReference type="eggNOG" id="COG0414">
    <property type="taxonomic scope" value="Bacteria"/>
</dbReference>
<dbReference type="HOGENOM" id="CLU_047148_0_2_11"/>
<dbReference type="OrthoDB" id="9773087at2"/>
<dbReference type="UniPathway" id="UPA00028">
    <property type="reaction ID" value="UER00005"/>
</dbReference>
<dbReference type="Proteomes" id="UP000006728">
    <property type="component" value="Chromosome"/>
</dbReference>
<dbReference type="GO" id="GO:0005829">
    <property type="term" value="C:cytosol"/>
    <property type="evidence" value="ECO:0007669"/>
    <property type="project" value="TreeGrafter"/>
</dbReference>
<dbReference type="GO" id="GO:0005524">
    <property type="term" value="F:ATP binding"/>
    <property type="evidence" value="ECO:0007669"/>
    <property type="project" value="UniProtKB-KW"/>
</dbReference>
<dbReference type="GO" id="GO:0004592">
    <property type="term" value="F:pantoate-beta-alanine ligase activity"/>
    <property type="evidence" value="ECO:0007669"/>
    <property type="project" value="UniProtKB-UniRule"/>
</dbReference>
<dbReference type="GO" id="GO:0015940">
    <property type="term" value="P:pantothenate biosynthetic process"/>
    <property type="evidence" value="ECO:0007669"/>
    <property type="project" value="UniProtKB-UniRule"/>
</dbReference>
<dbReference type="CDD" id="cd00560">
    <property type="entry name" value="PanC"/>
    <property type="match status" value="1"/>
</dbReference>
<dbReference type="FunFam" id="3.40.50.620:FF:000114">
    <property type="entry name" value="Pantothenate synthetase"/>
    <property type="match status" value="1"/>
</dbReference>
<dbReference type="Gene3D" id="3.40.50.620">
    <property type="entry name" value="HUPs"/>
    <property type="match status" value="1"/>
</dbReference>
<dbReference type="Gene3D" id="3.30.1300.10">
    <property type="entry name" value="Pantoate-beta-alanine ligase, C-terminal domain"/>
    <property type="match status" value="1"/>
</dbReference>
<dbReference type="HAMAP" id="MF_00158">
    <property type="entry name" value="PanC"/>
    <property type="match status" value="1"/>
</dbReference>
<dbReference type="InterPro" id="IPR003721">
    <property type="entry name" value="Pantoate_ligase"/>
</dbReference>
<dbReference type="InterPro" id="IPR042176">
    <property type="entry name" value="Pantoate_ligase_C"/>
</dbReference>
<dbReference type="InterPro" id="IPR014729">
    <property type="entry name" value="Rossmann-like_a/b/a_fold"/>
</dbReference>
<dbReference type="NCBIfam" id="TIGR00018">
    <property type="entry name" value="panC"/>
    <property type="match status" value="1"/>
</dbReference>
<dbReference type="PANTHER" id="PTHR21299">
    <property type="entry name" value="CYTIDYLATE KINASE/PANTOATE-BETA-ALANINE LIGASE"/>
    <property type="match status" value="1"/>
</dbReference>
<dbReference type="PANTHER" id="PTHR21299:SF1">
    <property type="entry name" value="PANTOATE--BETA-ALANINE LIGASE"/>
    <property type="match status" value="1"/>
</dbReference>
<dbReference type="Pfam" id="PF02569">
    <property type="entry name" value="Pantoate_ligase"/>
    <property type="match status" value="1"/>
</dbReference>
<dbReference type="SUPFAM" id="SSF52374">
    <property type="entry name" value="Nucleotidylyl transferase"/>
    <property type="match status" value="1"/>
</dbReference>